<proteinExistence type="inferred from homology"/>
<comment type="function">
    <text evidence="1">Na(+)/H(+) antiporter that extrudes sodium in exchange for external protons.</text>
</comment>
<comment type="catalytic activity">
    <reaction evidence="1">
        <text>Na(+)(in) + 2 H(+)(out) = Na(+)(out) + 2 H(+)(in)</text>
        <dbReference type="Rhea" id="RHEA:29251"/>
        <dbReference type="ChEBI" id="CHEBI:15378"/>
        <dbReference type="ChEBI" id="CHEBI:29101"/>
    </reaction>
    <physiologicalReaction direction="left-to-right" evidence="1">
        <dbReference type="Rhea" id="RHEA:29252"/>
    </physiologicalReaction>
</comment>
<comment type="subcellular location">
    <subcellularLocation>
        <location evidence="1">Cell inner membrane</location>
        <topology evidence="1">Multi-pass membrane protein</topology>
    </subcellularLocation>
</comment>
<comment type="similarity">
    <text evidence="1">Belongs to the NhaA Na(+)/H(+) (TC 2.A.33) antiporter family.</text>
</comment>
<reference key="1">
    <citation type="journal article" date="2005" name="J. Bacteriol.">
        <title>Whole-genome sequence analysis of Pseudomonas syringae pv. phaseolicola 1448A reveals divergence among pathovars in genes involved in virulence and transposition.</title>
        <authorList>
            <person name="Joardar V."/>
            <person name="Lindeberg M."/>
            <person name="Jackson R.W."/>
            <person name="Selengut J."/>
            <person name="Dodson R."/>
            <person name="Brinkac L.M."/>
            <person name="Daugherty S.C."/>
            <person name="DeBoy R.T."/>
            <person name="Durkin A.S."/>
            <person name="Gwinn Giglio M."/>
            <person name="Madupu R."/>
            <person name="Nelson W.C."/>
            <person name="Rosovitz M.J."/>
            <person name="Sullivan S.A."/>
            <person name="Crabtree J."/>
            <person name="Creasy T."/>
            <person name="Davidsen T.M."/>
            <person name="Haft D.H."/>
            <person name="Zafar N."/>
            <person name="Zhou L."/>
            <person name="Halpin R."/>
            <person name="Holley T."/>
            <person name="Khouri H.M."/>
            <person name="Feldblyum T.V."/>
            <person name="White O."/>
            <person name="Fraser C.M."/>
            <person name="Chatterjee A.K."/>
            <person name="Cartinhour S."/>
            <person name="Schneider D."/>
            <person name="Mansfield J.W."/>
            <person name="Collmer A."/>
            <person name="Buell R."/>
        </authorList>
    </citation>
    <scope>NUCLEOTIDE SEQUENCE [LARGE SCALE GENOMIC DNA]</scope>
    <source>
        <strain>1448A / Race 6</strain>
    </source>
</reference>
<accession>Q48PL9</accession>
<dbReference type="EMBL" id="CP000058">
    <property type="protein sequence ID" value="AAZ34455.1"/>
    <property type="molecule type" value="Genomic_DNA"/>
</dbReference>
<dbReference type="SMR" id="Q48PL9"/>
<dbReference type="KEGG" id="psp:PSPPH_0347"/>
<dbReference type="eggNOG" id="COG3004">
    <property type="taxonomic scope" value="Bacteria"/>
</dbReference>
<dbReference type="HOGENOM" id="CLU_015803_1_0_6"/>
<dbReference type="Proteomes" id="UP000000551">
    <property type="component" value="Chromosome"/>
</dbReference>
<dbReference type="GO" id="GO:0005886">
    <property type="term" value="C:plasma membrane"/>
    <property type="evidence" value="ECO:0007669"/>
    <property type="project" value="UniProtKB-SubCell"/>
</dbReference>
<dbReference type="GO" id="GO:0015385">
    <property type="term" value="F:sodium:proton antiporter activity"/>
    <property type="evidence" value="ECO:0007669"/>
    <property type="project" value="TreeGrafter"/>
</dbReference>
<dbReference type="GO" id="GO:0006885">
    <property type="term" value="P:regulation of pH"/>
    <property type="evidence" value="ECO:0007669"/>
    <property type="project" value="InterPro"/>
</dbReference>
<dbReference type="Gene3D" id="1.20.1530.10">
    <property type="entry name" value="Na+/H+ antiporter like domain"/>
    <property type="match status" value="1"/>
</dbReference>
<dbReference type="HAMAP" id="MF_01844">
    <property type="entry name" value="NhaA"/>
    <property type="match status" value="1"/>
</dbReference>
<dbReference type="InterPro" id="IPR023171">
    <property type="entry name" value="Na/H_antiporter_dom_sf"/>
</dbReference>
<dbReference type="InterPro" id="IPR004670">
    <property type="entry name" value="NhaA"/>
</dbReference>
<dbReference type="NCBIfam" id="TIGR00773">
    <property type="entry name" value="NhaA"/>
    <property type="match status" value="1"/>
</dbReference>
<dbReference type="NCBIfam" id="NF007111">
    <property type="entry name" value="PRK09560.1"/>
    <property type="match status" value="1"/>
</dbReference>
<dbReference type="NCBIfam" id="NF007112">
    <property type="entry name" value="PRK09561.1"/>
    <property type="match status" value="1"/>
</dbReference>
<dbReference type="PANTHER" id="PTHR30341:SF0">
    <property type="entry name" value="NA(+)_H(+) ANTIPORTER NHAA"/>
    <property type="match status" value="1"/>
</dbReference>
<dbReference type="PANTHER" id="PTHR30341">
    <property type="entry name" value="SODIUM ION/PROTON ANTIPORTER NHAA-RELATED"/>
    <property type="match status" value="1"/>
</dbReference>
<dbReference type="Pfam" id="PF06965">
    <property type="entry name" value="Na_H_antiport_1"/>
    <property type="match status" value="1"/>
</dbReference>
<protein>
    <recommendedName>
        <fullName evidence="1">Na(+)/H(+) antiporter NhaA 1</fullName>
    </recommendedName>
    <alternativeName>
        <fullName evidence="1">Sodium/proton antiporter NhaA 1</fullName>
    </alternativeName>
</protein>
<gene>
    <name evidence="1" type="primary">nhaA1</name>
    <name type="ordered locus">PSPPH_0347</name>
</gene>
<sequence length="391" mass="41075">MTQVSNRETPRGVAVLSRFLASESAGGIVLMAAALAALIVANSSLSASYFSILHSVWLGLSVELWINDGLMAIFFLMVGLEIKREVLAGGLATWGQRALPGFAAAGGMLVPALIYIAINWGNPQTLSGWAIPAATDIAFALGVLSLLGNRVPTSLKVFLAALAILDDLGAVTIIAFFYSSGLNLPMLAAAFATLAVLIALNRLNVRRLLPYLLLGALLWFFVLQSGVHATLAGVALALCIPMGKPEEEARSPLLFLEEKMHYWVAFAVVPIFGFANAGVSLSGITLANLIDPVPMGVALGLFVGKQIGVFLAAVLAIRAGLATLPENSNWVQLYGVAILCGIGFTMSLFIGNLAFPGSQHLIDEVKVGVLIGSGLAAIAGILLLRTRFSRH</sequence>
<organism>
    <name type="scientific">Pseudomonas savastanoi pv. phaseolicola (strain 1448A / Race 6)</name>
    <name type="common">Pseudomonas syringae pv. phaseolicola (strain 1448A / Race 6)</name>
    <dbReference type="NCBI Taxonomy" id="264730"/>
    <lineage>
        <taxon>Bacteria</taxon>
        <taxon>Pseudomonadati</taxon>
        <taxon>Pseudomonadota</taxon>
        <taxon>Gammaproteobacteria</taxon>
        <taxon>Pseudomonadales</taxon>
        <taxon>Pseudomonadaceae</taxon>
        <taxon>Pseudomonas</taxon>
    </lineage>
</organism>
<feature type="chain" id="PRO_0000334375" description="Na(+)/H(+) antiporter NhaA 1">
    <location>
        <begin position="1"/>
        <end position="391"/>
    </location>
</feature>
<feature type="transmembrane region" description="Helical" evidence="1">
    <location>
        <begin position="19"/>
        <end position="39"/>
    </location>
</feature>
<feature type="transmembrane region" description="Helical" evidence="1">
    <location>
        <begin position="56"/>
        <end position="76"/>
    </location>
</feature>
<feature type="transmembrane region" description="Helical" evidence="1">
    <location>
        <begin position="98"/>
        <end position="118"/>
    </location>
</feature>
<feature type="transmembrane region" description="Helical" evidence="1">
    <location>
        <begin position="128"/>
        <end position="148"/>
    </location>
</feature>
<feature type="transmembrane region" description="Helical" evidence="1">
    <location>
        <begin position="157"/>
        <end position="177"/>
    </location>
</feature>
<feature type="transmembrane region" description="Helical" evidence="1">
    <location>
        <begin position="180"/>
        <end position="200"/>
    </location>
</feature>
<feature type="transmembrane region" description="Helical" evidence="1">
    <location>
        <begin position="208"/>
        <end position="228"/>
    </location>
</feature>
<feature type="transmembrane region" description="Helical" evidence="1">
    <location>
        <begin position="264"/>
        <end position="284"/>
    </location>
</feature>
<feature type="transmembrane region" description="Helical" evidence="1">
    <location>
        <begin position="297"/>
        <end position="317"/>
    </location>
</feature>
<feature type="transmembrane region" description="Helical" evidence="1">
    <location>
        <begin position="335"/>
        <end position="355"/>
    </location>
</feature>
<feature type="transmembrane region" description="Helical" evidence="1">
    <location>
        <begin position="364"/>
        <end position="384"/>
    </location>
</feature>
<evidence type="ECO:0000255" key="1">
    <source>
        <dbReference type="HAMAP-Rule" id="MF_01844"/>
    </source>
</evidence>
<keyword id="KW-0050">Antiport</keyword>
<keyword id="KW-0997">Cell inner membrane</keyword>
<keyword id="KW-1003">Cell membrane</keyword>
<keyword id="KW-0406">Ion transport</keyword>
<keyword id="KW-0472">Membrane</keyword>
<keyword id="KW-0915">Sodium</keyword>
<keyword id="KW-0739">Sodium transport</keyword>
<keyword id="KW-0812">Transmembrane</keyword>
<keyword id="KW-1133">Transmembrane helix</keyword>
<keyword id="KW-0813">Transport</keyword>
<name>NHAA1_PSE14</name>